<organism>
    <name type="scientific">Frankia casuarinae (strain DSM 45818 / CECT 9043 / HFP020203 / CcI3)</name>
    <dbReference type="NCBI Taxonomy" id="106370"/>
    <lineage>
        <taxon>Bacteria</taxon>
        <taxon>Bacillati</taxon>
        <taxon>Actinomycetota</taxon>
        <taxon>Actinomycetes</taxon>
        <taxon>Frankiales</taxon>
        <taxon>Frankiaceae</taxon>
        <taxon>Frankia</taxon>
    </lineage>
</organism>
<feature type="chain" id="PRO_0000263453" description="Elongation factor G">
    <location>
        <begin position="1"/>
        <end position="698"/>
    </location>
</feature>
<feature type="domain" description="tr-type G">
    <location>
        <begin position="10"/>
        <end position="285"/>
    </location>
</feature>
<feature type="binding site" evidence="1">
    <location>
        <begin position="19"/>
        <end position="26"/>
    </location>
    <ligand>
        <name>GTP</name>
        <dbReference type="ChEBI" id="CHEBI:37565"/>
    </ligand>
</feature>
<feature type="binding site" evidence="1">
    <location>
        <begin position="83"/>
        <end position="87"/>
    </location>
    <ligand>
        <name>GTP</name>
        <dbReference type="ChEBI" id="CHEBI:37565"/>
    </ligand>
</feature>
<feature type="binding site" evidence="1">
    <location>
        <begin position="137"/>
        <end position="140"/>
    </location>
    <ligand>
        <name>GTP</name>
        <dbReference type="ChEBI" id="CHEBI:37565"/>
    </ligand>
</feature>
<evidence type="ECO:0000255" key="1">
    <source>
        <dbReference type="HAMAP-Rule" id="MF_00054"/>
    </source>
</evidence>
<proteinExistence type="inferred from homology"/>
<accession>Q2JFH9</accession>
<gene>
    <name evidence="1" type="primary">fusA</name>
    <name type="ordered locus">Francci3_0579</name>
</gene>
<comment type="function">
    <text evidence="1">Catalyzes the GTP-dependent ribosomal translocation step during translation elongation. During this step, the ribosome changes from the pre-translocational (PRE) to the post-translocational (POST) state as the newly formed A-site-bound peptidyl-tRNA and P-site-bound deacylated tRNA move to the P and E sites, respectively. Catalyzes the coordinated movement of the two tRNA molecules, the mRNA and conformational changes in the ribosome.</text>
</comment>
<comment type="subcellular location">
    <subcellularLocation>
        <location evidence="1">Cytoplasm</location>
    </subcellularLocation>
</comment>
<comment type="similarity">
    <text evidence="1">Belongs to the TRAFAC class translation factor GTPase superfamily. Classic translation factor GTPase family. EF-G/EF-2 subfamily.</text>
</comment>
<sequence length="698" mass="76735">MPSDVRSLLAGTRNIGIMAHIDAGKTTTTERILFYTGVNYKIGEVHEGGATMDWMEQEQERGITITSAATTCLWRDHTINIIDTPGHVDFTVEVERSLRVLDGAVAVFDAVAGVEPQSETVWKQADRYNVPRIAFVNKMDRVGAEFHRCVEMMIDRLDATPAVIQLPWGVEADFRGVIDLVRMKGLLWKTEDKGASYETVDIPRDHLEAAQEWRDKLLETVAENDDELMELYLEGEEPSTEQLVAALRRATLASKVNPVLCGSAFKNKGVQPMLDAVVDFLPNPLDIGATVGHAVGDEETEVRREPSEDEPFSALAFKIMSDPYVGKLTYIRVYSGKLTGGSPVLNSTKDRKERVGRILQMHANHREDREGVGAGQIVAVVGLKNTTTGDTLCDPNAPVILESMTFPAPVIHVAIEPKTKADQQKLGTAIQRLAEEDPTFQVRTDEETGQTIIAGMGELHLDVLVDRMRREFGVEANVGKPQVAYRETIRRKVEKVDYTHKKQTGGSGQYARVIINLEPSGGDGGGYEFENKVTGGRIPREYIPSVDAGCQEAMEFGVLAGYPLVDVKVTLLDGQFHDVDSSELAFKIAGSMAFKDAARKADPVLLEPLMAVEVTTPEDHMGDVIGDLNSRRGQIQAMEERGGSRIVRALVPLSEMFGYVGDLRSKTSGRASYSMQFDSYAEVPANVAKEIIAKARGE</sequence>
<protein>
    <recommendedName>
        <fullName evidence="1">Elongation factor G</fullName>
        <shortName evidence="1">EF-G</shortName>
    </recommendedName>
</protein>
<dbReference type="EMBL" id="CP000249">
    <property type="protein sequence ID" value="ABD09963.1"/>
    <property type="molecule type" value="Genomic_DNA"/>
</dbReference>
<dbReference type="RefSeq" id="WP_011435037.1">
    <property type="nucleotide sequence ID" value="NZ_JENI01000032.1"/>
</dbReference>
<dbReference type="SMR" id="Q2JFH9"/>
<dbReference type="STRING" id="106370.Francci3_0579"/>
<dbReference type="KEGG" id="fra:Francci3_0579"/>
<dbReference type="eggNOG" id="COG0480">
    <property type="taxonomic scope" value="Bacteria"/>
</dbReference>
<dbReference type="HOGENOM" id="CLU_002794_4_1_11"/>
<dbReference type="OrthoDB" id="9801472at2"/>
<dbReference type="PhylomeDB" id="Q2JFH9"/>
<dbReference type="Proteomes" id="UP000001937">
    <property type="component" value="Chromosome"/>
</dbReference>
<dbReference type="GO" id="GO:0005737">
    <property type="term" value="C:cytoplasm"/>
    <property type="evidence" value="ECO:0007669"/>
    <property type="project" value="UniProtKB-SubCell"/>
</dbReference>
<dbReference type="GO" id="GO:0005525">
    <property type="term" value="F:GTP binding"/>
    <property type="evidence" value="ECO:0007669"/>
    <property type="project" value="UniProtKB-UniRule"/>
</dbReference>
<dbReference type="GO" id="GO:0003924">
    <property type="term" value="F:GTPase activity"/>
    <property type="evidence" value="ECO:0007669"/>
    <property type="project" value="InterPro"/>
</dbReference>
<dbReference type="GO" id="GO:0003746">
    <property type="term" value="F:translation elongation factor activity"/>
    <property type="evidence" value="ECO:0007669"/>
    <property type="project" value="UniProtKB-UniRule"/>
</dbReference>
<dbReference type="GO" id="GO:0032790">
    <property type="term" value="P:ribosome disassembly"/>
    <property type="evidence" value="ECO:0007669"/>
    <property type="project" value="TreeGrafter"/>
</dbReference>
<dbReference type="CDD" id="cd01886">
    <property type="entry name" value="EF-G"/>
    <property type="match status" value="1"/>
</dbReference>
<dbReference type="CDD" id="cd16262">
    <property type="entry name" value="EFG_III"/>
    <property type="match status" value="1"/>
</dbReference>
<dbReference type="CDD" id="cd01434">
    <property type="entry name" value="EFG_mtEFG1_IV"/>
    <property type="match status" value="1"/>
</dbReference>
<dbReference type="CDD" id="cd03713">
    <property type="entry name" value="EFG_mtEFG_C"/>
    <property type="match status" value="1"/>
</dbReference>
<dbReference type="CDD" id="cd04088">
    <property type="entry name" value="EFG_mtEFG_II"/>
    <property type="match status" value="1"/>
</dbReference>
<dbReference type="FunFam" id="2.40.30.10:FF:000006">
    <property type="entry name" value="Elongation factor G"/>
    <property type="match status" value="1"/>
</dbReference>
<dbReference type="FunFam" id="3.30.230.10:FF:000003">
    <property type="entry name" value="Elongation factor G"/>
    <property type="match status" value="1"/>
</dbReference>
<dbReference type="FunFam" id="3.30.70.240:FF:000001">
    <property type="entry name" value="Elongation factor G"/>
    <property type="match status" value="1"/>
</dbReference>
<dbReference type="FunFam" id="3.30.70.870:FF:000001">
    <property type="entry name" value="Elongation factor G"/>
    <property type="match status" value="1"/>
</dbReference>
<dbReference type="FunFam" id="3.40.50.300:FF:000029">
    <property type="entry name" value="Elongation factor G"/>
    <property type="match status" value="1"/>
</dbReference>
<dbReference type="Gene3D" id="3.30.230.10">
    <property type="match status" value="1"/>
</dbReference>
<dbReference type="Gene3D" id="3.30.70.240">
    <property type="match status" value="1"/>
</dbReference>
<dbReference type="Gene3D" id="3.30.70.870">
    <property type="entry name" value="Elongation Factor G (Translational Gtpase), domain 3"/>
    <property type="match status" value="1"/>
</dbReference>
<dbReference type="Gene3D" id="3.40.50.300">
    <property type="entry name" value="P-loop containing nucleotide triphosphate hydrolases"/>
    <property type="match status" value="1"/>
</dbReference>
<dbReference type="Gene3D" id="2.40.30.10">
    <property type="entry name" value="Translation factors"/>
    <property type="match status" value="1"/>
</dbReference>
<dbReference type="HAMAP" id="MF_00054_B">
    <property type="entry name" value="EF_G_EF_2_B"/>
    <property type="match status" value="1"/>
</dbReference>
<dbReference type="InterPro" id="IPR053905">
    <property type="entry name" value="EF-G-like_DII"/>
</dbReference>
<dbReference type="InterPro" id="IPR041095">
    <property type="entry name" value="EFG_II"/>
</dbReference>
<dbReference type="InterPro" id="IPR009022">
    <property type="entry name" value="EFG_III"/>
</dbReference>
<dbReference type="InterPro" id="IPR035647">
    <property type="entry name" value="EFG_III/V"/>
</dbReference>
<dbReference type="InterPro" id="IPR047872">
    <property type="entry name" value="EFG_IV"/>
</dbReference>
<dbReference type="InterPro" id="IPR035649">
    <property type="entry name" value="EFG_V"/>
</dbReference>
<dbReference type="InterPro" id="IPR000640">
    <property type="entry name" value="EFG_V-like"/>
</dbReference>
<dbReference type="InterPro" id="IPR031157">
    <property type="entry name" value="G_TR_CS"/>
</dbReference>
<dbReference type="InterPro" id="IPR027417">
    <property type="entry name" value="P-loop_NTPase"/>
</dbReference>
<dbReference type="InterPro" id="IPR020568">
    <property type="entry name" value="Ribosomal_Su5_D2-typ_SF"/>
</dbReference>
<dbReference type="InterPro" id="IPR014721">
    <property type="entry name" value="Ribsml_uS5_D2-typ_fold_subgr"/>
</dbReference>
<dbReference type="InterPro" id="IPR005225">
    <property type="entry name" value="Small_GTP-bd"/>
</dbReference>
<dbReference type="InterPro" id="IPR000795">
    <property type="entry name" value="T_Tr_GTP-bd_dom"/>
</dbReference>
<dbReference type="InterPro" id="IPR009000">
    <property type="entry name" value="Transl_B-barrel_sf"/>
</dbReference>
<dbReference type="InterPro" id="IPR004540">
    <property type="entry name" value="Transl_elong_EFG/EF2"/>
</dbReference>
<dbReference type="InterPro" id="IPR005517">
    <property type="entry name" value="Transl_elong_EFG/EF2_IV"/>
</dbReference>
<dbReference type="NCBIfam" id="TIGR00484">
    <property type="entry name" value="EF-G"/>
    <property type="match status" value="1"/>
</dbReference>
<dbReference type="NCBIfam" id="NF009379">
    <property type="entry name" value="PRK12740.1-3"/>
    <property type="match status" value="1"/>
</dbReference>
<dbReference type="NCBIfam" id="NF009381">
    <property type="entry name" value="PRK12740.1-5"/>
    <property type="match status" value="1"/>
</dbReference>
<dbReference type="NCBIfam" id="TIGR00231">
    <property type="entry name" value="small_GTP"/>
    <property type="match status" value="1"/>
</dbReference>
<dbReference type="PANTHER" id="PTHR43261:SF1">
    <property type="entry name" value="RIBOSOME-RELEASING FACTOR 2, MITOCHONDRIAL"/>
    <property type="match status" value="1"/>
</dbReference>
<dbReference type="PANTHER" id="PTHR43261">
    <property type="entry name" value="TRANSLATION ELONGATION FACTOR G-RELATED"/>
    <property type="match status" value="1"/>
</dbReference>
<dbReference type="Pfam" id="PF22042">
    <property type="entry name" value="EF-G_D2"/>
    <property type="match status" value="1"/>
</dbReference>
<dbReference type="Pfam" id="PF00679">
    <property type="entry name" value="EFG_C"/>
    <property type="match status" value="1"/>
</dbReference>
<dbReference type="Pfam" id="PF14492">
    <property type="entry name" value="EFG_III"/>
    <property type="match status" value="1"/>
</dbReference>
<dbReference type="Pfam" id="PF03764">
    <property type="entry name" value="EFG_IV"/>
    <property type="match status" value="1"/>
</dbReference>
<dbReference type="Pfam" id="PF00009">
    <property type="entry name" value="GTP_EFTU"/>
    <property type="match status" value="1"/>
</dbReference>
<dbReference type="PRINTS" id="PR00315">
    <property type="entry name" value="ELONGATNFCT"/>
</dbReference>
<dbReference type="SMART" id="SM00838">
    <property type="entry name" value="EFG_C"/>
    <property type="match status" value="1"/>
</dbReference>
<dbReference type="SMART" id="SM00889">
    <property type="entry name" value="EFG_IV"/>
    <property type="match status" value="1"/>
</dbReference>
<dbReference type="SUPFAM" id="SSF54980">
    <property type="entry name" value="EF-G C-terminal domain-like"/>
    <property type="match status" value="2"/>
</dbReference>
<dbReference type="SUPFAM" id="SSF52540">
    <property type="entry name" value="P-loop containing nucleoside triphosphate hydrolases"/>
    <property type="match status" value="1"/>
</dbReference>
<dbReference type="SUPFAM" id="SSF54211">
    <property type="entry name" value="Ribosomal protein S5 domain 2-like"/>
    <property type="match status" value="1"/>
</dbReference>
<dbReference type="SUPFAM" id="SSF50447">
    <property type="entry name" value="Translation proteins"/>
    <property type="match status" value="1"/>
</dbReference>
<dbReference type="PROSITE" id="PS00301">
    <property type="entry name" value="G_TR_1"/>
    <property type="match status" value="1"/>
</dbReference>
<dbReference type="PROSITE" id="PS51722">
    <property type="entry name" value="G_TR_2"/>
    <property type="match status" value="1"/>
</dbReference>
<keyword id="KW-0963">Cytoplasm</keyword>
<keyword id="KW-0251">Elongation factor</keyword>
<keyword id="KW-0342">GTP-binding</keyword>
<keyword id="KW-0547">Nucleotide-binding</keyword>
<keyword id="KW-0648">Protein biosynthesis</keyword>
<keyword id="KW-1185">Reference proteome</keyword>
<reference key="1">
    <citation type="journal article" date="2007" name="Genome Res.">
        <title>Genome characteristics of facultatively symbiotic Frankia sp. strains reflect host range and host plant biogeography.</title>
        <authorList>
            <person name="Normand P."/>
            <person name="Lapierre P."/>
            <person name="Tisa L.S."/>
            <person name="Gogarten J.P."/>
            <person name="Alloisio N."/>
            <person name="Bagnarol E."/>
            <person name="Bassi C.A."/>
            <person name="Berry A.M."/>
            <person name="Bickhart D.M."/>
            <person name="Choisne N."/>
            <person name="Couloux A."/>
            <person name="Cournoyer B."/>
            <person name="Cruveiller S."/>
            <person name="Daubin V."/>
            <person name="Demange N."/>
            <person name="Francino M.P."/>
            <person name="Goltsman E."/>
            <person name="Huang Y."/>
            <person name="Kopp O.R."/>
            <person name="Labarre L."/>
            <person name="Lapidus A."/>
            <person name="Lavire C."/>
            <person name="Marechal J."/>
            <person name="Martinez M."/>
            <person name="Mastronunzio J.E."/>
            <person name="Mullin B.C."/>
            <person name="Niemann J."/>
            <person name="Pujic P."/>
            <person name="Rawnsley T."/>
            <person name="Rouy Z."/>
            <person name="Schenowitz C."/>
            <person name="Sellstedt A."/>
            <person name="Tavares F."/>
            <person name="Tomkins J.P."/>
            <person name="Vallenet D."/>
            <person name="Valverde C."/>
            <person name="Wall L.G."/>
            <person name="Wang Y."/>
            <person name="Medigue C."/>
            <person name="Benson D.R."/>
        </authorList>
    </citation>
    <scope>NUCLEOTIDE SEQUENCE [LARGE SCALE GENOMIC DNA]</scope>
    <source>
        <strain>DSM 45818 / CECT 9043 / HFP020203 / CcI3</strain>
    </source>
</reference>
<name>EFG_FRACC</name>